<dbReference type="EMBL" id="CU468135">
    <property type="protein sequence ID" value="CAO95843.1"/>
    <property type="molecule type" value="Genomic_DNA"/>
</dbReference>
<dbReference type="RefSeq" id="WP_012440545.1">
    <property type="nucleotide sequence ID" value="NC_010694.1"/>
</dbReference>
<dbReference type="SMR" id="B2VD53"/>
<dbReference type="STRING" id="465817.ETA_07970"/>
<dbReference type="KEGG" id="eta:ETA_07970"/>
<dbReference type="eggNOG" id="COG4582">
    <property type="taxonomic scope" value="Bacteria"/>
</dbReference>
<dbReference type="HOGENOM" id="CLU_076303_0_0_6"/>
<dbReference type="OrthoDB" id="5294622at2"/>
<dbReference type="Proteomes" id="UP000001726">
    <property type="component" value="Chromosome"/>
</dbReference>
<dbReference type="GO" id="GO:0032153">
    <property type="term" value="C:cell division site"/>
    <property type="evidence" value="ECO:0007669"/>
    <property type="project" value="TreeGrafter"/>
</dbReference>
<dbReference type="GO" id="GO:0005737">
    <property type="term" value="C:cytoplasm"/>
    <property type="evidence" value="ECO:0007669"/>
    <property type="project" value="UniProtKB-SubCell"/>
</dbReference>
<dbReference type="GO" id="GO:0000917">
    <property type="term" value="P:division septum assembly"/>
    <property type="evidence" value="ECO:0007669"/>
    <property type="project" value="UniProtKB-KW"/>
</dbReference>
<dbReference type="GO" id="GO:0043093">
    <property type="term" value="P:FtsZ-dependent cytokinesis"/>
    <property type="evidence" value="ECO:0007669"/>
    <property type="project" value="UniProtKB-UniRule"/>
</dbReference>
<dbReference type="FunFam" id="1.10.3900.10:FF:000001">
    <property type="entry name" value="Cell division protein ZapD"/>
    <property type="match status" value="1"/>
</dbReference>
<dbReference type="FunFam" id="2.60.440.10:FF:000001">
    <property type="entry name" value="Cell division protein ZapD"/>
    <property type="match status" value="1"/>
</dbReference>
<dbReference type="Gene3D" id="1.10.3900.10">
    <property type="entry name" value="YacF-like"/>
    <property type="match status" value="1"/>
</dbReference>
<dbReference type="Gene3D" id="2.60.440.10">
    <property type="entry name" value="YacF-like domains"/>
    <property type="match status" value="1"/>
</dbReference>
<dbReference type="HAMAP" id="MF_01092">
    <property type="entry name" value="ZapD"/>
    <property type="match status" value="1"/>
</dbReference>
<dbReference type="InterPro" id="IPR009777">
    <property type="entry name" value="ZapD"/>
</dbReference>
<dbReference type="InterPro" id="IPR027462">
    <property type="entry name" value="ZapD_C"/>
</dbReference>
<dbReference type="InterPro" id="IPR036268">
    <property type="entry name" value="ZapD_sf"/>
</dbReference>
<dbReference type="NCBIfam" id="NF003653">
    <property type="entry name" value="PRK05287.1-1"/>
    <property type="match status" value="1"/>
</dbReference>
<dbReference type="PANTHER" id="PTHR39455">
    <property type="entry name" value="CELL DIVISION PROTEIN ZAPD"/>
    <property type="match status" value="1"/>
</dbReference>
<dbReference type="PANTHER" id="PTHR39455:SF1">
    <property type="entry name" value="CELL DIVISION PROTEIN ZAPD"/>
    <property type="match status" value="1"/>
</dbReference>
<dbReference type="Pfam" id="PF07072">
    <property type="entry name" value="ZapD"/>
    <property type="match status" value="1"/>
</dbReference>
<dbReference type="SUPFAM" id="SSF160950">
    <property type="entry name" value="YacF-like"/>
    <property type="match status" value="1"/>
</dbReference>
<proteinExistence type="inferred from homology"/>
<sequence length="247" mass="28339">MSTTVLFEHPLNEKMRTWLRIEFLLKQLSASQIIVDHQGALTFFRNAGELLDVFERGELRTEILKELERQQQKLLSWAEVPGVDMTQIEMHRAKLKGCATSLIAAPRMGQLLREERLISLVRQRLSIPGGCCSFDLPTLHIWLHIEQQLRDQQVAVWLDSLAPIRDALMLLLALIRQSGILRTHTSLNGFFQDNAEGADLLRLQLRLEDALYPQVSGHKSRYAIRFLPLDSERGEVPARFNFELACC</sequence>
<name>ZAPD_ERWT9</name>
<keyword id="KW-0131">Cell cycle</keyword>
<keyword id="KW-0132">Cell division</keyword>
<keyword id="KW-0963">Cytoplasm</keyword>
<keyword id="KW-1185">Reference proteome</keyword>
<keyword id="KW-0717">Septation</keyword>
<evidence type="ECO:0000255" key="1">
    <source>
        <dbReference type="HAMAP-Rule" id="MF_01092"/>
    </source>
</evidence>
<reference key="1">
    <citation type="journal article" date="2008" name="Environ. Microbiol.">
        <title>The genome of Erwinia tasmaniensis strain Et1/99, a non-pathogenic bacterium in the genus Erwinia.</title>
        <authorList>
            <person name="Kube M."/>
            <person name="Migdoll A.M."/>
            <person name="Mueller I."/>
            <person name="Kuhl H."/>
            <person name="Beck A."/>
            <person name="Reinhardt R."/>
            <person name="Geider K."/>
        </authorList>
    </citation>
    <scope>NUCLEOTIDE SEQUENCE [LARGE SCALE GENOMIC DNA]</scope>
    <source>
        <strain>DSM 17950 / CFBP 7177 / CIP 109463 / NCPPB 4357 / Et1/99</strain>
    </source>
</reference>
<accession>B2VD53</accession>
<protein>
    <recommendedName>
        <fullName evidence="1">Cell division protein ZapD</fullName>
    </recommendedName>
    <alternativeName>
        <fullName evidence="1">Z ring-associated protein D</fullName>
    </alternativeName>
</protein>
<organism>
    <name type="scientific">Erwinia tasmaniensis (strain DSM 17950 / CFBP 7177 / CIP 109463 / NCPPB 4357 / Et1/99)</name>
    <dbReference type="NCBI Taxonomy" id="465817"/>
    <lineage>
        <taxon>Bacteria</taxon>
        <taxon>Pseudomonadati</taxon>
        <taxon>Pseudomonadota</taxon>
        <taxon>Gammaproteobacteria</taxon>
        <taxon>Enterobacterales</taxon>
        <taxon>Erwiniaceae</taxon>
        <taxon>Erwinia</taxon>
    </lineage>
</organism>
<gene>
    <name evidence="1" type="primary">zapD</name>
    <name type="ordered locus">ETA_07970</name>
</gene>
<feature type="chain" id="PRO_1000136943" description="Cell division protein ZapD">
    <location>
        <begin position="1"/>
        <end position="247"/>
    </location>
</feature>
<comment type="function">
    <text evidence="1">Cell division factor that enhances FtsZ-ring assembly. Directly interacts with FtsZ and promotes bundling of FtsZ protofilaments, with a reduction in FtsZ GTPase activity.</text>
</comment>
<comment type="subunit">
    <text evidence="1">Interacts with FtsZ.</text>
</comment>
<comment type="subcellular location">
    <subcellularLocation>
        <location evidence="1">Cytoplasm</location>
    </subcellularLocation>
    <text evidence="1">Localizes to mid-cell in an FtsZ-dependent manner.</text>
</comment>
<comment type="similarity">
    <text evidence="1">Belongs to the ZapD family.</text>
</comment>